<keyword id="KW-0002">3D-structure</keyword>
<keyword id="KW-0155">Chromate resistance</keyword>
<keyword id="KW-0903">Direct protein sequencing</keyword>
<keyword id="KW-0479">Metal-binding</keyword>
<keyword id="KW-0500">Molybdenum</keyword>
<keyword id="KW-0574">Periplasm</keyword>
<keyword id="KW-1185">Reference proteome</keyword>
<keyword id="KW-0732">Signal</keyword>
<keyword id="KW-0813">Transport</keyword>
<keyword id="KW-0826">Tungsten</keyword>
<protein>
    <recommendedName>
        <fullName evidence="11 12 13">Molybdate-binding protein ModA</fullName>
    </recommendedName>
    <alternativeName>
        <fullName evidence="14">Molybdate/tungstate-binding protein ModA</fullName>
    </alternativeName>
</protein>
<accession>P37329</accession>
<reference key="1">
    <citation type="journal article" date="1995" name="J. Bacteriol.">
        <title>Regulation of the molybdate transport operon, modABCD, of Escherichia coli in response to molybdate availability.</title>
        <authorList>
            <person name="Rech S."/>
            <person name="Deppenmeier U."/>
            <person name="Gunsalus R.P."/>
        </authorList>
    </citation>
    <scope>NUCLEOTIDE SEQUENCE [GENOMIC DNA]</scope>
    <scope>INDUCTION</scope>
    <source>
        <strain>K12</strain>
    </source>
</reference>
<reference key="2">
    <citation type="journal article" date="1995" name="J. Bacteriol.">
        <title>Genetic analysis of the modABCD (molybdate transport) operon of Escherichia coli.</title>
        <authorList>
            <person name="Maupin-Furlow J.A."/>
            <person name="Rosentel J.K."/>
            <person name="Lee J.H."/>
            <person name="Deppenmeier U."/>
            <person name="Gunsalus R.P."/>
            <person name="Shanmugam K.T."/>
        </authorList>
    </citation>
    <scope>NUCLEOTIDE SEQUENCE [GENOMIC DNA]</scope>
</reference>
<reference key="3">
    <citation type="journal article" date="1995" name="Microbiol. Res.">
        <title>Molecular analysis of the molybdate uptake operon, modABCD, of Escherichia coli and modR, a regulatory gene.</title>
        <authorList>
            <person name="Walkenhorst H.M."/>
            <person name="Hemschemeier S.K."/>
            <person name="Eichenlaub R."/>
        </authorList>
    </citation>
    <scope>NUCLEOTIDE SEQUENCE [GENOMIC DNA]</scope>
    <source>
        <strain>K12 / MC1000 / ATCC 39531</strain>
    </source>
</reference>
<reference key="4">
    <citation type="journal article" date="1996" name="DNA Res.">
        <title>A 718-kb DNA sequence of the Escherichia coli K-12 genome corresponding to the 12.7-28.0 min region on the linkage map.</title>
        <authorList>
            <person name="Oshima T."/>
            <person name="Aiba H."/>
            <person name="Baba T."/>
            <person name="Fujita K."/>
            <person name="Hayashi K."/>
            <person name="Honjo A."/>
            <person name="Ikemoto K."/>
            <person name="Inada T."/>
            <person name="Itoh T."/>
            <person name="Kajihara M."/>
            <person name="Kanai K."/>
            <person name="Kashimoto K."/>
            <person name="Kimura S."/>
            <person name="Kitagawa M."/>
            <person name="Makino K."/>
            <person name="Masuda S."/>
            <person name="Miki T."/>
            <person name="Mizobuchi K."/>
            <person name="Mori H."/>
            <person name="Motomura K."/>
            <person name="Nakamura Y."/>
            <person name="Nashimoto H."/>
            <person name="Nishio Y."/>
            <person name="Saito N."/>
            <person name="Sampei G."/>
            <person name="Seki Y."/>
            <person name="Tagami H."/>
            <person name="Takemoto K."/>
            <person name="Wada C."/>
            <person name="Yamamoto Y."/>
            <person name="Yano M."/>
            <person name="Horiuchi T."/>
        </authorList>
    </citation>
    <scope>NUCLEOTIDE SEQUENCE [LARGE SCALE GENOMIC DNA]</scope>
    <source>
        <strain>K12 / W3110 / ATCC 27325 / DSM 5911</strain>
    </source>
</reference>
<reference key="5">
    <citation type="journal article" date="1997" name="Science">
        <title>The complete genome sequence of Escherichia coli K-12.</title>
        <authorList>
            <person name="Blattner F.R."/>
            <person name="Plunkett G. III"/>
            <person name="Bloch C.A."/>
            <person name="Perna N.T."/>
            <person name="Burland V."/>
            <person name="Riley M."/>
            <person name="Collado-Vides J."/>
            <person name="Glasner J.D."/>
            <person name="Rode C.K."/>
            <person name="Mayhew G.F."/>
            <person name="Gregor J."/>
            <person name="Davis N.W."/>
            <person name="Kirkpatrick H.A."/>
            <person name="Goeden M.A."/>
            <person name="Rose D.J."/>
            <person name="Mau B."/>
            <person name="Shao Y."/>
        </authorList>
    </citation>
    <scope>NUCLEOTIDE SEQUENCE [LARGE SCALE GENOMIC DNA]</scope>
    <source>
        <strain>K12 / MG1655 / ATCC 47076</strain>
    </source>
</reference>
<reference key="6">
    <citation type="journal article" date="2006" name="Mol. Syst. Biol.">
        <title>Highly accurate genome sequences of Escherichia coli K-12 strains MG1655 and W3110.</title>
        <authorList>
            <person name="Hayashi K."/>
            <person name="Morooka N."/>
            <person name="Yamamoto Y."/>
            <person name="Fujita K."/>
            <person name="Isono K."/>
            <person name="Choi S."/>
            <person name="Ohtsubo E."/>
            <person name="Baba T."/>
            <person name="Wanner B.L."/>
            <person name="Mori H."/>
            <person name="Horiuchi T."/>
        </authorList>
    </citation>
    <scope>NUCLEOTIDE SEQUENCE [LARGE SCALE GENOMIC DNA]</scope>
    <source>
        <strain>K12 / W3110 / ATCC 27325 / DSM 5911</strain>
    </source>
</reference>
<reference key="7">
    <citation type="journal article" date="1996" name="J. Biol. Chem.">
        <title>Properties of the periplasmic ModA molybdate-binding protein of Escherichia coli.</title>
        <authorList>
            <person name="Rech S."/>
            <person name="Wolin C."/>
            <person name="Gunsalus R.P."/>
        </authorList>
    </citation>
    <scope>PROTEIN SEQUENCE OF 25-31</scope>
    <scope>FUNCTION</scope>
    <scope>SUBCELLULAR LOCATION</scope>
    <scope>DISRUPTION PHENOTYPE</scope>
</reference>
<reference key="8">
    <citation type="journal article" date="1993" name="J. Gen. Microbiol.">
        <title>Molybdenum uptake in Escherichia coli K12.</title>
        <authorList>
            <person name="Lopez Corcuera G."/>
            <person name="Bastidas M."/>
            <person name="Dubourdieu M."/>
        </authorList>
    </citation>
    <scope>FUNCTION</scope>
    <scope>SUBCELLULAR LOCATION</scope>
</reference>
<reference key="9">
    <citation type="journal article" date="1996" name="J. Bacteriol.">
        <title>Repression of the Escherichia coli modABCD (molybdate transport) operon by ModE.</title>
        <authorList>
            <person name="Grunden A.M."/>
            <person name="Ray R.M."/>
            <person name="Rosentel J.K."/>
            <person name="Healy F.G."/>
            <person name="Shanmugam K.T."/>
        </authorList>
    </citation>
    <scope>INDUCTION</scope>
</reference>
<reference key="10">
    <citation type="journal article" date="1998" name="Biochim. Biophys. Acta">
        <title>Molybdate binding by ModA, the periplasmic component of the Escherichia coli mod molybdate transport system.</title>
        <authorList>
            <person name="Imperial J."/>
            <person name="Hadi M."/>
            <person name="Amy N.K."/>
        </authorList>
    </citation>
    <scope>FUNCTION</scope>
    <scope>SUBCELLULAR LOCATION</scope>
</reference>
<reference key="11">
    <citation type="journal article" date="2011" name="J. Bacteriol.">
        <title>A molecular basis for tungstate selectivity in prokaryotic ABC transport systems.</title>
        <authorList>
            <person name="Bevers L.E."/>
            <person name="Schwarz G."/>
            <person name="Hagen W.R."/>
        </authorList>
    </citation>
    <scope>FUNCTION</scope>
</reference>
<reference evidence="15 16" key="12">
    <citation type="journal article" date="1997" name="Nat. Struct. Biol.">
        <title>Crystal structure of the molybdate binding protein ModA.</title>
        <authorList>
            <person name="Hu Y."/>
            <person name="Rech S."/>
            <person name="Gunsalus R.P."/>
            <person name="Rees D.C."/>
        </authorList>
    </citation>
    <scope>X-RAY CRYSTALLOGRAPHY (1.75 ANGSTROMS) OF 25-257 IN COMPLEXES WITH MOLYBDATE AND TUNGSTATE</scope>
</reference>
<reference evidence="17 18" key="13">
    <citation type="journal article" date="2012" name="J. Biol. Inorg. Chem.">
        <title>Binding of ReO4(-) with an engineered MoO4(2-)-binding protein: towards a new approach in radiopharmaceutical applications.</title>
        <authorList>
            <person name="Aryal B.P."/>
            <person name="Brugarolas P."/>
            <person name="He C."/>
        </authorList>
    </citation>
    <scope>X-RAY CRYSTALLOGRAPHY (1.7 ANGSTROMS) OF 25-257 AND MUTANT CYS-35/CYS-177 IN COMPLEX WITH PERRHENATE</scope>
    <scope>FUNCTION</scope>
    <scope>BIOTECHNOLOGY</scope>
    <scope>MUTAGENESIS OF ALA-35; SER-36; SER-63; ASP-175; ARG-177; VAL-199 AND VAL-218</scope>
</reference>
<reference evidence="19" key="14">
    <citation type="journal article" date="2017" name="ChemBioChem">
        <title>Chromate binding and removal by the molybdate-binding protein ModA.</title>
        <authorList>
            <person name="Karpus J."/>
            <person name="Bosscher M."/>
            <person name="Ajiboye I."/>
            <person name="Zhang L."/>
            <person name="He C."/>
        </authorList>
    </citation>
    <scope>X-RAY CRYSTALLOGRAPHY (1.4 ANGSTROMS) IN COMPLEX WITH CHROMATE</scope>
    <scope>FUNCTION</scope>
    <scope>BIOTECHNOLOGY</scope>
    <scope>MUTAGENESIS OF SER-36 AND SER-63</scope>
</reference>
<feature type="signal peptide" evidence="7">
    <location>
        <begin position="1"/>
        <end position="24"/>
    </location>
</feature>
<feature type="chain" id="PRO_0000031827" description="Molybdate-binding protein ModA">
    <location>
        <begin position="25"/>
        <end position="257"/>
    </location>
</feature>
<feature type="binding site" evidence="8 20">
    <location>
        <position position="36"/>
    </location>
    <ligand>
        <name>molybdate</name>
        <dbReference type="ChEBI" id="CHEBI:36264"/>
    </ligand>
</feature>
<feature type="binding site" evidence="8 20">
    <location>
        <position position="63"/>
    </location>
    <ligand>
        <name>molybdate</name>
        <dbReference type="ChEBI" id="CHEBI:36264"/>
    </ligand>
</feature>
<feature type="binding site" evidence="8 20">
    <location>
        <position position="149"/>
    </location>
    <ligand>
        <name>molybdate</name>
        <dbReference type="ChEBI" id="CHEBI:36264"/>
    </ligand>
</feature>
<feature type="binding site" evidence="8 20">
    <location>
        <position position="176"/>
    </location>
    <ligand>
        <name>molybdate</name>
        <dbReference type="ChEBI" id="CHEBI:36264"/>
    </ligand>
</feature>
<feature type="binding site" evidence="8 20">
    <location>
        <position position="194"/>
    </location>
    <ligand>
        <name>molybdate</name>
        <dbReference type="ChEBI" id="CHEBI:36264"/>
    </ligand>
</feature>
<feature type="mutagenesis site" description="About 5-fold increased binding affinity for perrhenate as a result of formation of an intramolecular disulfide bond with mutant C-177, which stabilizes the metal-bound closed conformation, but no increased binding affinity for molybdate; when associated with C-177." evidence="2">
    <original>A</original>
    <variation>C</variation>
    <location>
        <position position="35"/>
    </location>
</feature>
<feature type="mutagenesis site" description="Loss of chromate removal from a buffered solution; when associated with A-63." evidence="3">
    <original>S</original>
    <variation>A</variation>
    <location>
        <position position="36"/>
    </location>
</feature>
<feature type="mutagenesis site" description="Loss of binding to perrhenate. Slightly reduced chromate removal from a buffered solution." evidence="2 3">
    <original>S</original>
    <variation>C</variation>
    <location>
        <position position="36"/>
    </location>
</feature>
<feature type="mutagenesis site" description="Loss of binding to perrhenate. Slightly reduced chromate removal from a buffered solution. Significantly reduced chromate removal from a buffered solution; when associated with D-63." evidence="2 3">
    <original>S</original>
    <variation>D</variation>
    <location>
        <position position="36"/>
    </location>
</feature>
<feature type="mutagenesis site" description="Slightly reduced chromate removal from a buffered solution." evidence="3">
    <original>S</original>
    <variation>E</variation>
    <location>
        <position position="36"/>
    </location>
</feature>
<feature type="mutagenesis site" description="Loss of chromate removal from a buffered solution; when associated with A-36." evidence="3">
    <original>S</original>
    <variation>A</variation>
    <location>
        <position position="63"/>
    </location>
</feature>
<feature type="mutagenesis site" description="Reduced binding affinity for perrhenate." evidence="2">
    <original>S</original>
    <variation>C</variation>
    <location>
        <position position="63"/>
    </location>
</feature>
<feature type="mutagenesis site" description="Reduced binding affinity for perrhenate. Significantly reduced chromate removal from a buffered solution; when associated with D-36." evidence="2 3">
    <original>S</original>
    <variation>D</variation>
    <location>
        <position position="63"/>
    </location>
</feature>
<feature type="mutagenesis site" description="Reduced binding affinity for perrhenate." evidence="2">
    <original>D</original>
    <variation>N</variation>
    <location>
        <position position="175"/>
    </location>
</feature>
<feature type="mutagenesis site" description="About 5-fold increased binding affinity for perrhenate as a result of formation of an intramolecular disulfide bond with mutant C-35, which stabilizes the metal-bound closed conformation, but no increased binding affinity for molybdate; when associated with C-35." evidence="2">
    <original>R</original>
    <variation>C</variation>
    <location>
        <position position="177"/>
    </location>
</feature>
<feature type="mutagenesis site" description="No change in affinity for perrhenate." evidence="2">
    <original>V</original>
    <variation>A</variation>
    <variation>Y</variation>
    <variation>W</variation>
    <location>
        <position position="199"/>
    </location>
</feature>
<feature type="mutagenesis site" description="No change in affinity for perrhenate." evidence="2">
    <original>V</original>
    <variation>A</variation>
    <variation>Y</variation>
    <variation>W</variation>
    <location>
        <position position="218"/>
    </location>
</feature>
<feature type="strand" evidence="21">
    <location>
        <begin position="29"/>
        <end position="34"/>
    </location>
</feature>
<feature type="helix" evidence="21">
    <location>
        <begin position="35"/>
        <end position="37"/>
    </location>
</feature>
<feature type="helix" evidence="21">
    <location>
        <begin position="38"/>
        <end position="52"/>
    </location>
</feature>
<feature type="strand" evidence="21">
    <location>
        <begin position="56"/>
        <end position="61"/>
    </location>
</feature>
<feature type="helix" evidence="21">
    <location>
        <begin position="63"/>
        <end position="72"/>
    </location>
</feature>
<feature type="strand" evidence="21">
    <location>
        <begin position="77"/>
        <end position="80"/>
    </location>
</feature>
<feature type="helix" evidence="21">
    <location>
        <begin position="84"/>
        <end position="92"/>
    </location>
</feature>
<feature type="helix" evidence="21">
    <location>
        <begin position="98"/>
        <end position="100"/>
    </location>
</feature>
<feature type="strand" evidence="21">
    <location>
        <begin position="102"/>
        <end position="107"/>
    </location>
</feature>
<feature type="strand" evidence="21">
    <location>
        <begin position="109"/>
        <end position="114"/>
    </location>
</feature>
<feature type="helix" evidence="21">
    <location>
        <begin position="130"/>
        <end position="134"/>
    </location>
</feature>
<feature type="strand" evidence="21">
    <location>
        <begin position="139"/>
        <end position="142"/>
    </location>
</feature>
<feature type="turn" evidence="21">
    <location>
        <begin position="144"/>
        <end position="146"/>
    </location>
</feature>
<feature type="helix" evidence="21">
    <location>
        <begin position="148"/>
        <end position="159"/>
    </location>
</feature>
<feature type="helix" evidence="21">
    <location>
        <begin position="163"/>
        <end position="166"/>
    </location>
</feature>
<feature type="helix" evidence="21">
    <location>
        <begin position="167"/>
        <end position="169"/>
    </location>
</feature>
<feature type="strand" evidence="21">
    <location>
        <begin position="170"/>
        <end position="175"/>
    </location>
</feature>
<feature type="helix" evidence="21">
    <location>
        <begin position="176"/>
        <end position="184"/>
    </location>
</feature>
<feature type="strand" evidence="21">
    <location>
        <begin position="187"/>
        <end position="194"/>
    </location>
</feature>
<feature type="helix" evidence="21">
    <location>
        <begin position="195"/>
        <end position="200"/>
    </location>
</feature>
<feature type="strand" evidence="21">
    <location>
        <begin position="204"/>
        <end position="209"/>
    </location>
</feature>
<feature type="helix" evidence="21">
    <location>
        <begin position="212"/>
        <end position="214"/>
    </location>
</feature>
<feature type="strand" evidence="21">
    <location>
        <begin position="218"/>
        <end position="225"/>
    </location>
</feature>
<feature type="helix" evidence="21">
    <location>
        <begin position="231"/>
        <end position="240"/>
    </location>
</feature>
<feature type="helix" evidence="21">
    <location>
        <begin position="243"/>
        <end position="251"/>
    </location>
</feature>
<proteinExistence type="evidence at protein level"/>
<gene>
    <name type="primary">modA</name>
    <name type="ordered locus">b0763</name>
    <name type="ordered locus">JW0746</name>
</gene>
<sequence length="257" mass="27364">MARKWLNLFAGAALSFAVAGNALADEGKITVFAAASLTNAMQDIATQFKKEKGVDVVSSFASSSTLARQIEAGAPADLFISADQKWMDYAVDKKAIDTATRQTLLGNSLVVVAPKASVQKDFTIDSKTNWTSLLNGGRLAVGDPEHVPAGIYAKEALQKLGAWDTLSPKLAPAEDVRGALALVERNEAPLGIVYGSDAVASKGVKVVATFPEDSHKKVEYPVAVVEGHNNATVKAFYDYLKGPQAAEIFKRYGFTIK</sequence>
<evidence type="ECO:0000269" key="1">
    <source>
    </source>
</evidence>
<evidence type="ECO:0000269" key="2">
    <source>
    </source>
</evidence>
<evidence type="ECO:0000269" key="3">
    <source>
    </source>
</evidence>
<evidence type="ECO:0000269" key="4">
    <source>
    </source>
</evidence>
<evidence type="ECO:0000269" key="5">
    <source>
    </source>
</evidence>
<evidence type="ECO:0000269" key="6">
    <source>
    </source>
</evidence>
<evidence type="ECO:0000269" key="7">
    <source>
    </source>
</evidence>
<evidence type="ECO:0000269" key="8">
    <source>
    </source>
</evidence>
<evidence type="ECO:0000269" key="9">
    <source>
    </source>
</evidence>
<evidence type="ECO:0000303" key="10">
    <source>
    </source>
</evidence>
<evidence type="ECO:0000303" key="11">
    <source>
    </source>
</evidence>
<evidence type="ECO:0000303" key="12">
    <source>
    </source>
</evidence>
<evidence type="ECO:0000303" key="13">
    <source>
    </source>
</evidence>
<evidence type="ECO:0000305" key="14"/>
<evidence type="ECO:0000312" key="15">
    <source>
        <dbReference type="PDB" id="1AMF"/>
    </source>
</evidence>
<evidence type="ECO:0000312" key="16">
    <source>
        <dbReference type="PDB" id="1WOD"/>
    </source>
</evidence>
<evidence type="ECO:0000312" key="17">
    <source>
        <dbReference type="PDB" id="3AXF"/>
    </source>
</evidence>
<evidence type="ECO:0000312" key="18">
    <source>
        <dbReference type="PDB" id="3R26"/>
    </source>
</evidence>
<evidence type="ECO:0000312" key="19">
    <source>
        <dbReference type="PDB" id="4XXU"/>
    </source>
</evidence>
<evidence type="ECO:0007744" key="20">
    <source>
        <dbReference type="PDB" id="1AMF"/>
    </source>
</evidence>
<evidence type="ECO:0007829" key="21">
    <source>
        <dbReference type="PDB" id="4XXU"/>
    </source>
</evidence>
<name>MODA_ECOLI</name>
<organism>
    <name type="scientific">Escherichia coli (strain K12)</name>
    <dbReference type="NCBI Taxonomy" id="83333"/>
    <lineage>
        <taxon>Bacteria</taxon>
        <taxon>Pseudomonadati</taxon>
        <taxon>Pseudomonadota</taxon>
        <taxon>Gammaproteobacteria</taxon>
        <taxon>Enterobacterales</taxon>
        <taxon>Enterobacteriaceae</taxon>
        <taxon>Escherichia</taxon>
    </lineage>
</organism>
<dbReference type="EMBL" id="L34009">
    <property type="protein sequence ID" value="AAB00835.1"/>
    <property type="molecule type" value="Genomic_DNA"/>
</dbReference>
<dbReference type="EMBL" id="U27192">
    <property type="protein sequence ID" value="AAB60171.1"/>
    <property type="molecule type" value="Genomic_DNA"/>
</dbReference>
<dbReference type="EMBL" id="U07867">
    <property type="protein sequence ID" value="AAB06893.1"/>
    <property type="molecule type" value="Genomic_DNA"/>
</dbReference>
<dbReference type="EMBL" id="U00096">
    <property type="protein sequence ID" value="AAC73850.1"/>
    <property type="molecule type" value="Genomic_DNA"/>
</dbReference>
<dbReference type="EMBL" id="AP009048">
    <property type="protein sequence ID" value="BAA35427.1"/>
    <property type="molecule type" value="Genomic_DNA"/>
</dbReference>
<dbReference type="PIR" id="C64812">
    <property type="entry name" value="C64812"/>
</dbReference>
<dbReference type="RefSeq" id="NP_415284.1">
    <property type="nucleotide sequence ID" value="NC_000913.3"/>
</dbReference>
<dbReference type="RefSeq" id="WP_000101984.1">
    <property type="nucleotide sequence ID" value="NZ_LN832404.1"/>
</dbReference>
<dbReference type="PDB" id="1AMF">
    <property type="method" value="X-ray"/>
    <property type="resolution" value="1.75 A"/>
    <property type="chains" value="A=25-257"/>
</dbReference>
<dbReference type="PDB" id="1WOD">
    <property type="method" value="X-ray"/>
    <property type="resolution" value="1.75 A"/>
    <property type="chains" value="A=25-257"/>
</dbReference>
<dbReference type="PDB" id="3AXF">
    <property type="method" value="X-ray"/>
    <property type="resolution" value="2.00 A"/>
    <property type="chains" value="A/B/C=25-257"/>
</dbReference>
<dbReference type="PDB" id="3R26">
    <property type="method" value="X-ray"/>
    <property type="resolution" value="1.70 A"/>
    <property type="chains" value="A=25-257"/>
</dbReference>
<dbReference type="PDB" id="4XXU">
    <property type="method" value="X-ray"/>
    <property type="resolution" value="1.43 A"/>
    <property type="chains" value="A/B=1-257"/>
</dbReference>
<dbReference type="PDBsum" id="1AMF"/>
<dbReference type="PDBsum" id="1WOD"/>
<dbReference type="PDBsum" id="3AXF"/>
<dbReference type="PDBsum" id="3R26"/>
<dbReference type="PDBsum" id="4XXU"/>
<dbReference type="SMR" id="P37329"/>
<dbReference type="BioGRID" id="4262087">
    <property type="interactions" value="16"/>
</dbReference>
<dbReference type="ComplexPortal" id="CPX-4342">
    <property type="entry name" value="Molybdate ABC transporter complex"/>
</dbReference>
<dbReference type="FunCoup" id="P37329">
    <property type="interactions" value="386"/>
</dbReference>
<dbReference type="IntAct" id="P37329">
    <property type="interactions" value="1"/>
</dbReference>
<dbReference type="STRING" id="511145.b0763"/>
<dbReference type="TCDB" id="3.A.1.8.1">
    <property type="family name" value="the atp-binding cassette (abc) superfamily"/>
</dbReference>
<dbReference type="jPOST" id="P37329"/>
<dbReference type="PaxDb" id="511145-b0763"/>
<dbReference type="EnsemblBacteria" id="AAC73850">
    <property type="protein sequence ID" value="AAC73850"/>
    <property type="gene ID" value="b0763"/>
</dbReference>
<dbReference type="GeneID" id="945364"/>
<dbReference type="KEGG" id="ecj:JW0746"/>
<dbReference type="KEGG" id="eco:b0763"/>
<dbReference type="KEGG" id="ecoc:C3026_03870"/>
<dbReference type="PATRIC" id="fig|1411691.4.peg.1515"/>
<dbReference type="EchoBASE" id="EB2325"/>
<dbReference type="eggNOG" id="COG0725">
    <property type="taxonomic scope" value="Bacteria"/>
</dbReference>
<dbReference type="HOGENOM" id="CLU_065520_3_0_6"/>
<dbReference type="InParanoid" id="P37329"/>
<dbReference type="OMA" id="VCAPQVP"/>
<dbReference type="OrthoDB" id="9785015at2"/>
<dbReference type="PhylomeDB" id="P37329"/>
<dbReference type="BioCyc" id="EcoCyc:MODA-MONOMER"/>
<dbReference type="BioCyc" id="MetaCyc:MODA-MONOMER"/>
<dbReference type="EvolutionaryTrace" id="P37329"/>
<dbReference type="PRO" id="PR:P37329"/>
<dbReference type="Proteomes" id="UP000000625">
    <property type="component" value="Chromosome"/>
</dbReference>
<dbReference type="GO" id="GO:0055052">
    <property type="term" value="C:ATP-binding cassette (ABC) transporter complex, substrate-binding subunit-containing"/>
    <property type="evidence" value="ECO:0000303"/>
    <property type="project" value="ComplexPortal"/>
</dbReference>
<dbReference type="GO" id="GO:0016020">
    <property type="term" value="C:membrane"/>
    <property type="evidence" value="ECO:0000303"/>
    <property type="project" value="ComplexPortal"/>
</dbReference>
<dbReference type="GO" id="GO:0030288">
    <property type="term" value="C:outer membrane-bounded periplasmic space"/>
    <property type="evidence" value="ECO:0000314"/>
    <property type="project" value="EcoCyc"/>
</dbReference>
<dbReference type="GO" id="GO:0015412">
    <property type="term" value="F:ABC-type molybdate transporter activity"/>
    <property type="evidence" value="ECO:0000305"/>
    <property type="project" value="UniProtKB"/>
</dbReference>
<dbReference type="GO" id="GO:0030973">
    <property type="term" value="F:molybdate ion binding"/>
    <property type="evidence" value="ECO:0000314"/>
    <property type="project" value="UniProtKB"/>
</dbReference>
<dbReference type="GO" id="GO:0030151">
    <property type="term" value="F:molybdenum ion binding"/>
    <property type="evidence" value="ECO:0000314"/>
    <property type="project" value="EcoCyc"/>
</dbReference>
<dbReference type="GO" id="GO:1901359">
    <property type="term" value="F:tungstate binding"/>
    <property type="evidence" value="ECO:0000314"/>
    <property type="project" value="UniProtKB"/>
</dbReference>
<dbReference type="GO" id="GO:0015689">
    <property type="term" value="P:molybdate ion transport"/>
    <property type="evidence" value="ECO:0000315"/>
    <property type="project" value="EcoCyc"/>
</dbReference>
<dbReference type="GO" id="GO:0046687">
    <property type="term" value="P:response to chromate"/>
    <property type="evidence" value="ECO:0007669"/>
    <property type="project" value="UniProtKB-KW"/>
</dbReference>
<dbReference type="GO" id="GO:0070614">
    <property type="term" value="P:tungstate ion transport"/>
    <property type="evidence" value="ECO:0000303"/>
    <property type="project" value="ComplexPortal"/>
</dbReference>
<dbReference type="CDD" id="cd13536">
    <property type="entry name" value="PBP2_EcModA"/>
    <property type="match status" value="1"/>
</dbReference>
<dbReference type="FunFam" id="3.40.190.10:FF:000035">
    <property type="entry name" value="Molybdate ABC transporter substrate-binding protein"/>
    <property type="match status" value="1"/>
</dbReference>
<dbReference type="Gene3D" id="3.40.190.10">
    <property type="entry name" value="Periplasmic binding protein-like II"/>
    <property type="match status" value="2"/>
</dbReference>
<dbReference type="InterPro" id="IPR005950">
    <property type="entry name" value="ModA"/>
</dbReference>
<dbReference type="InterPro" id="IPR050682">
    <property type="entry name" value="ModA/WtpA"/>
</dbReference>
<dbReference type="NCBIfam" id="TIGR01256">
    <property type="entry name" value="modA"/>
    <property type="match status" value="1"/>
</dbReference>
<dbReference type="NCBIfam" id="NF007958">
    <property type="entry name" value="PRK10677.1"/>
    <property type="match status" value="1"/>
</dbReference>
<dbReference type="PANTHER" id="PTHR30632">
    <property type="entry name" value="MOLYBDATE-BINDING PERIPLASMIC PROTEIN"/>
    <property type="match status" value="1"/>
</dbReference>
<dbReference type="PANTHER" id="PTHR30632:SF17">
    <property type="entry name" value="MOLYBDATE-BINDING PROTEIN MODA"/>
    <property type="match status" value="1"/>
</dbReference>
<dbReference type="Pfam" id="PF13531">
    <property type="entry name" value="SBP_bac_11"/>
    <property type="match status" value="1"/>
</dbReference>
<dbReference type="PIRSF" id="PIRSF004846">
    <property type="entry name" value="ModA"/>
    <property type="match status" value="1"/>
</dbReference>
<dbReference type="SUPFAM" id="SSF53850">
    <property type="entry name" value="Periplasmic binding protein-like II"/>
    <property type="match status" value="1"/>
</dbReference>
<comment type="function">
    <text evidence="1 2 3 5 7 9">Part of the ABC transporter complex ModABC involved in the transport of molybdenum into the cell (PubMed:8576221). Binds molybdate with high affinity in vitro and with a similar affinity in vivo (PubMed:21784948, PubMed:21861186, PubMed:28150901, PubMed:8409926, PubMed:8576221, PubMed:9545596). Binds tungstate with high affinity in vitro (PubMed:21784948, PubMed:28150901, PubMed:8576221, PubMed:9545596). Binds unnatural anion perrhenate with high affinity in vitro (PubMed:21861186). Does not bind sulfate, phosphate, arsenate, selenate, chlorate, metavanadate, nitrate, perchlorate, permanganate or carbonate (PubMed:28150901, PubMed:8576221, PubMed:9545596).</text>
</comment>
<comment type="subunit">
    <text evidence="14">The complex is composed of two ATP-binding proteins (ModC), two transmembrane proteins (ModB) and a solute-binding protein (ModA).</text>
</comment>
<comment type="subcellular location">
    <subcellularLocation>
        <location evidence="5 7 9">Periplasm</location>
    </subcellularLocation>
</comment>
<comment type="induction">
    <text evidence="4 6">Expression is up-regulated by molybdate limitation (PubMed:7860583). Repressed by molybdate-bound ModE (PubMed:8550508).</text>
</comment>
<comment type="disruption phenotype">
    <text evidence="7">Cells are unable to transport molybdate unless high levels of it is supplied in the culture medium.</text>
</comment>
<comment type="biotechnology">
    <text evidence="10 11">May be useful in radiopharmaceutical applications as an engineered disulfide bond-containing protein with increased affinity for perrhenate (PubMed:21861186). May be used to remove chromate, which is toxic to many biological systems, from environmental aqueous solutions (PubMed:28150901).</text>
</comment>
<comment type="similarity">
    <text evidence="14">Belongs to the bacterial solute-binding protein ModA family.</text>
</comment>
<comment type="caution">
    <text evidence="3 7">According to a report, does not bind chromate (PubMed:8576221). According to another report, binds chromate with high affinity and is able to remove it from an aqueous solution in vitro (PubMed:28150901).</text>
</comment>
<comment type="caution">
    <text evidence="14">The mod operon containing this protein has previously been called the chlD locus.</text>
</comment>